<dbReference type="EC" id="1.7.1.7" evidence="1"/>
<dbReference type="EMBL" id="CP000512">
    <property type="protein sequence ID" value="ABM32495.1"/>
    <property type="molecule type" value="Genomic_DNA"/>
</dbReference>
<dbReference type="RefSeq" id="WP_011795038.1">
    <property type="nucleotide sequence ID" value="NC_008752.1"/>
</dbReference>
<dbReference type="SMR" id="A1TNF7"/>
<dbReference type="STRING" id="397945.Aave_1911"/>
<dbReference type="GeneID" id="79791730"/>
<dbReference type="KEGG" id="aav:Aave_1911"/>
<dbReference type="eggNOG" id="COG0516">
    <property type="taxonomic scope" value="Bacteria"/>
</dbReference>
<dbReference type="HOGENOM" id="CLU_022552_5_0_4"/>
<dbReference type="OrthoDB" id="9805398at2"/>
<dbReference type="Proteomes" id="UP000002596">
    <property type="component" value="Chromosome"/>
</dbReference>
<dbReference type="GO" id="GO:0005829">
    <property type="term" value="C:cytosol"/>
    <property type="evidence" value="ECO:0007669"/>
    <property type="project" value="TreeGrafter"/>
</dbReference>
<dbReference type="GO" id="GO:1902560">
    <property type="term" value="C:GMP reductase complex"/>
    <property type="evidence" value="ECO:0007669"/>
    <property type="project" value="InterPro"/>
</dbReference>
<dbReference type="GO" id="GO:0003920">
    <property type="term" value="F:GMP reductase activity"/>
    <property type="evidence" value="ECO:0007669"/>
    <property type="project" value="UniProtKB-UniRule"/>
</dbReference>
<dbReference type="GO" id="GO:0006163">
    <property type="term" value="P:purine nucleotide metabolic process"/>
    <property type="evidence" value="ECO:0007669"/>
    <property type="project" value="UniProtKB-UniRule"/>
</dbReference>
<dbReference type="CDD" id="cd00381">
    <property type="entry name" value="IMPDH"/>
    <property type="match status" value="1"/>
</dbReference>
<dbReference type="Gene3D" id="3.20.20.70">
    <property type="entry name" value="Aldolase class I"/>
    <property type="match status" value="1"/>
</dbReference>
<dbReference type="HAMAP" id="MF_01511">
    <property type="entry name" value="GMP_reduct_type2"/>
    <property type="match status" value="1"/>
</dbReference>
<dbReference type="InterPro" id="IPR013785">
    <property type="entry name" value="Aldolase_TIM"/>
</dbReference>
<dbReference type="InterPro" id="IPR050139">
    <property type="entry name" value="GMP_reductase"/>
</dbReference>
<dbReference type="InterPro" id="IPR005994">
    <property type="entry name" value="GuaC_type_2"/>
</dbReference>
<dbReference type="InterPro" id="IPR015875">
    <property type="entry name" value="IMP_DH/GMP_Rdtase_CS"/>
</dbReference>
<dbReference type="InterPro" id="IPR001093">
    <property type="entry name" value="IMP_DH_GMPRt"/>
</dbReference>
<dbReference type="NCBIfam" id="TIGR01306">
    <property type="entry name" value="GMP_reduct_2"/>
    <property type="match status" value="1"/>
</dbReference>
<dbReference type="NCBIfam" id="NF003966">
    <property type="entry name" value="PRK05458.1"/>
    <property type="match status" value="1"/>
</dbReference>
<dbReference type="PANTHER" id="PTHR43170">
    <property type="entry name" value="GMP REDUCTASE"/>
    <property type="match status" value="1"/>
</dbReference>
<dbReference type="PANTHER" id="PTHR43170:SF5">
    <property type="entry name" value="GMP REDUCTASE"/>
    <property type="match status" value="1"/>
</dbReference>
<dbReference type="Pfam" id="PF00478">
    <property type="entry name" value="IMPDH"/>
    <property type="match status" value="1"/>
</dbReference>
<dbReference type="PIRSF" id="PIRSF036500">
    <property type="entry name" value="GMP_red_Firmic"/>
    <property type="match status" value="1"/>
</dbReference>
<dbReference type="SMART" id="SM01240">
    <property type="entry name" value="IMPDH"/>
    <property type="match status" value="1"/>
</dbReference>
<dbReference type="SUPFAM" id="SSF51412">
    <property type="entry name" value="Inosine monophosphate dehydrogenase (IMPDH)"/>
    <property type="match status" value="1"/>
</dbReference>
<dbReference type="PROSITE" id="PS00487">
    <property type="entry name" value="IMP_DH_GMP_RED"/>
    <property type="match status" value="1"/>
</dbReference>
<reference key="1">
    <citation type="submission" date="2006-12" db="EMBL/GenBank/DDBJ databases">
        <title>Complete sequence of Acidovorax avenae subsp. citrulli AAC00-1.</title>
        <authorList>
            <person name="Copeland A."/>
            <person name="Lucas S."/>
            <person name="Lapidus A."/>
            <person name="Barry K."/>
            <person name="Detter J.C."/>
            <person name="Glavina del Rio T."/>
            <person name="Dalin E."/>
            <person name="Tice H."/>
            <person name="Pitluck S."/>
            <person name="Kiss H."/>
            <person name="Brettin T."/>
            <person name="Bruce D."/>
            <person name="Han C."/>
            <person name="Tapia R."/>
            <person name="Gilna P."/>
            <person name="Schmutz J."/>
            <person name="Larimer F."/>
            <person name="Land M."/>
            <person name="Hauser L."/>
            <person name="Kyrpides N."/>
            <person name="Kim E."/>
            <person name="Stahl D."/>
            <person name="Richardson P."/>
        </authorList>
    </citation>
    <scope>NUCLEOTIDE SEQUENCE [LARGE SCALE GENOMIC DNA]</scope>
    <source>
        <strain>AAC00-1</strain>
    </source>
</reference>
<evidence type="ECO:0000255" key="1">
    <source>
        <dbReference type="HAMAP-Rule" id="MF_01511"/>
    </source>
</evidence>
<comment type="function">
    <text evidence="1">Catalyzes the irreversible NADPH-dependent deamination of GMP to IMP. It functions in the conversion of nucleobase, nucleoside and nucleotide derivatives of G to A nucleotides, and in maintaining the intracellular balance of A and G nucleotides.</text>
</comment>
<comment type="catalytic activity">
    <reaction evidence="1">
        <text>IMP + NH4(+) + NADP(+) = GMP + NADPH + 2 H(+)</text>
        <dbReference type="Rhea" id="RHEA:17185"/>
        <dbReference type="ChEBI" id="CHEBI:15378"/>
        <dbReference type="ChEBI" id="CHEBI:28938"/>
        <dbReference type="ChEBI" id="CHEBI:57783"/>
        <dbReference type="ChEBI" id="CHEBI:58053"/>
        <dbReference type="ChEBI" id="CHEBI:58115"/>
        <dbReference type="ChEBI" id="CHEBI:58349"/>
        <dbReference type="EC" id="1.7.1.7"/>
    </reaction>
</comment>
<comment type="similarity">
    <text evidence="1">Belongs to the IMPDH/GMPR family. GuaC type 2 subfamily.</text>
</comment>
<feature type="chain" id="PRO_0000294269" description="GMP reductase">
    <location>
        <begin position="1"/>
        <end position="325"/>
    </location>
</feature>
<feature type="active site" description="Thioimidate intermediate" evidence="1">
    <location>
        <position position="173"/>
    </location>
</feature>
<feature type="binding site" evidence="1">
    <location>
        <begin position="202"/>
        <end position="225"/>
    </location>
    <ligand>
        <name>NADP(+)</name>
        <dbReference type="ChEBI" id="CHEBI:58349"/>
    </ligand>
</feature>
<gene>
    <name evidence="1" type="primary">guaC</name>
    <name type="ordered locus">Aave_1911</name>
</gene>
<organism>
    <name type="scientific">Paracidovorax citrulli (strain AAC00-1)</name>
    <name type="common">Acidovorax citrulli</name>
    <dbReference type="NCBI Taxonomy" id="397945"/>
    <lineage>
        <taxon>Bacteria</taxon>
        <taxon>Pseudomonadati</taxon>
        <taxon>Pseudomonadota</taxon>
        <taxon>Betaproteobacteria</taxon>
        <taxon>Burkholderiales</taxon>
        <taxon>Comamonadaceae</taxon>
        <taxon>Paracidovorax</taxon>
    </lineage>
</organism>
<proteinExistence type="inferred from homology"/>
<keyword id="KW-0521">NADP</keyword>
<keyword id="KW-0560">Oxidoreductase</keyword>
<sequence>MEIFDYDNVLLLPRKCRVESRSECDASVTLGQRSFRLPVVPANMKTVVDEKICRWLASNGYFYVMHRFDLDNVQFVRDMHAAGCFASISLGVKQPDYDTVDRLVAEGLCPEYITIDIAHGHADTVKAMIAYLKQHLPQAFVIAGNVATPEAIIDLENWGADATKVGVGPGKVCITKLKTGFGTGGWQLSALKWCARVATKPIIADGGIRSHGDIAKSIRFGATMVMIGSLFAGHEESPGKTVEVDGEQFKEYYGSASDFNKGEYKHVEGKRILEPIKGRLADTLVEMEQDVQSSISYSGGRRLMDIRKVNYVILGGDNAGEHLLM</sequence>
<accession>A1TNF7</accession>
<protein>
    <recommendedName>
        <fullName evidence="1">GMP reductase</fullName>
        <ecNumber evidence="1">1.7.1.7</ecNumber>
    </recommendedName>
    <alternativeName>
        <fullName evidence="1">Guanosine 5'-monophosphate oxidoreductase</fullName>
        <shortName evidence="1">Guanosine monophosphate reductase</shortName>
    </alternativeName>
</protein>
<name>GUAC_PARC0</name>